<protein>
    <recommendedName>
        <fullName>Nuclear pore complex protein nup54</fullName>
    </recommendedName>
    <alternativeName>
        <fullName>Nucleoporin nup54</fullName>
    </alternativeName>
</protein>
<dbReference type="EMBL" id="AAFI02000005">
    <property type="protein sequence ID" value="EAL72510.1"/>
    <property type="molecule type" value="Genomic_DNA"/>
</dbReference>
<dbReference type="RefSeq" id="XP_646706.1">
    <property type="nucleotide sequence ID" value="XM_641614.1"/>
</dbReference>
<dbReference type="PDB" id="9HCJ">
    <property type="method" value="EM"/>
    <property type="resolution" value="30.00 A"/>
    <property type="chains" value="H0/H1/H2/H3=1-440"/>
</dbReference>
<dbReference type="PDBsum" id="9HCJ"/>
<dbReference type="SMR" id="Q55BX5"/>
<dbReference type="STRING" id="44689.Q55BX5"/>
<dbReference type="PaxDb" id="44689-DDB0235246"/>
<dbReference type="EnsemblProtists" id="EAL72510">
    <property type="protein sequence ID" value="EAL72510"/>
    <property type="gene ID" value="DDB_G0270320"/>
</dbReference>
<dbReference type="GeneID" id="8617680"/>
<dbReference type="KEGG" id="ddi:DDB_G0270320"/>
<dbReference type="dictyBase" id="DDB_G0270320">
    <property type="gene designation" value="nup54"/>
</dbReference>
<dbReference type="VEuPathDB" id="AmoebaDB:DDB_G0270320"/>
<dbReference type="eggNOG" id="KOG3091">
    <property type="taxonomic scope" value="Eukaryota"/>
</dbReference>
<dbReference type="HOGENOM" id="CLU_623217_0_0_1"/>
<dbReference type="InParanoid" id="Q55BX5"/>
<dbReference type="OMA" id="MMQTRLH"/>
<dbReference type="PhylomeDB" id="Q55BX5"/>
<dbReference type="PRO" id="PR:Q55BX5"/>
<dbReference type="Proteomes" id="UP000002195">
    <property type="component" value="Chromosome 1"/>
</dbReference>
<dbReference type="GO" id="GO:0044613">
    <property type="term" value="C:nuclear pore central transport channel"/>
    <property type="evidence" value="ECO:0000318"/>
    <property type="project" value="GO_Central"/>
</dbReference>
<dbReference type="GO" id="GO:0017056">
    <property type="term" value="F:structural constituent of nuclear pore"/>
    <property type="evidence" value="ECO:0000318"/>
    <property type="project" value="GO_Central"/>
</dbReference>
<dbReference type="GO" id="GO:0051028">
    <property type="term" value="P:mRNA transport"/>
    <property type="evidence" value="ECO:0007669"/>
    <property type="project" value="UniProtKB-KW"/>
</dbReference>
<dbReference type="GO" id="GO:0006607">
    <property type="term" value="P:NLS-bearing protein import into nucleus"/>
    <property type="evidence" value="ECO:0000318"/>
    <property type="project" value="GO_Central"/>
</dbReference>
<dbReference type="GO" id="GO:0006999">
    <property type="term" value="P:nuclear pore organization"/>
    <property type="evidence" value="ECO:0000318"/>
    <property type="project" value="GO_Central"/>
</dbReference>
<dbReference type="GO" id="GO:0036228">
    <property type="term" value="P:protein localization to nuclear inner membrane"/>
    <property type="evidence" value="ECO:0000318"/>
    <property type="project" value="GO_Central"/>
</dbReference>
<dbReference type="InterPro" id="IPR025574">
    <property type="entry name" value="Nucleoporin_FG_rpt"/>
</dbReference>
<dbReference type="InterPro" id="IPR024864">
    <property type="entry name" value="Nup54/Nup57/Nup44"/>
</dbReference>
<dbReference type="InterPro" id="IPR025712">
    <property type="entry name" value="Nup54_alpha-helical_dom"/>
</dbReference>
<dbReference type="PANTHER" id="PTHR13000">
    <property type="entry name" value="NUCLEOPORIN P54"/>
    <property type="match status" value="1"/>
</dbReference>
<dbReference type="PANTHER" id="PTHR13000:SF0">
    <property type="entry name" value="NUCLEOPORIN P54"/>
    <property type="match status" value="1"/>
</dbReference>
<dbReference type="Pfam" id="PF13634">
    <property type="entry name" value="Nucleoporin_FG"/>
    <property type="match status" value="2"/>
</dbReference>
<dbReference type="Pfam" id="PF13874">
    <property type="entry name" value="Nup54"/>
    <property type="match status" value="1"/>
</dbReference>
<keyword id="KW-0002">3D-structure</keyword>
<keyword id="KW-0509">mRNA transport</keyword>
<keyword id="KW-0906">Nuclear pore complex</keyword>
<keyword id="KW-0539">Nucleus</keyword>
<keyword id="KW-0653">Protein transport</keyword>
<keyword id="KW-1185">Reference proteome</keyword>
<keyword id="KW-0677">Repeat</keyword>
<keyword id="KW-0811">Translocation</keyword>
<keyword id="KW-0813">Transport</keyword>
<feature type="chain" id="PRO_0000393274" description="Nuclear pore complex protein nup54">
    <location>
        <begin position="1"/>
        <end position="440"/>
    </location>
</feature>
<feature type="repeat" description="1">
    <location>
        <begin position="4"/>
        <end position="5"/>
    </location>
</feature>
<feature type="repeat" description="2">
    <location>
        <begin position="15"/>
        <end position="16"/>
    </location>
</feature>
<feature type="repeat" description="3">
    <location>
        <begin position="30"/>
        <end position="31"/>
    </location>
</feature>
<feature type="repeat" description="4">
    <location>
        <begin position="40"/>
        <end position="41"/>
    </location>
</feature>
<feature type="repeat" description="5">
    <location>
        <begin position="54"/>
        <end position="55"/>
    </location>
</feature>
<feature type="repeat" description="6">
    <location>
        <begin position="71"/>
        <end position="72"/>
    </location>
</feature>
<feature type="repeat" description="7">
    <location>
        <begin position="85"/>
        <end position="86"/>
    </location>
</feature>
<feature type="repeat" description="8">
    <location>
        <begin position="98"/>
        <end position="99"/>
    </location>
</feature>
<feature type="repeat" description="9">
    <location>
        <begin position="109"/>
        <end position="110"/>
    </location>
</feature>
<feature type="repeat" description="10">
    <location>
        <begin position="171"/>
        <end position="172"/>
    </location>
</feature>
<feature type="repeat" description="11">
    <location>
        <begin position="183"/>
        <end position="184"/>
    </location>
</feature>
<feature type="region of interest" description="Disordered" evidence="2">
    <location>
        <begin position="1"/>
        <end position="188"/>
    </location>
</feature>
<feature type="region of interest" description="11 X 2 AA repeats of F-G">
    <location>
        <begin position="4"/>
        <end position="184"/>
    </location>
</feature>
<feature type="compositionally biased region" description="Gly residues" evidence="2">
    <location>
        <begin position="25"/>
        <end position="40"/>
    </location>
</feature>
<feature type="compositionally biased region" description="Gly residues" evidence="2">
    <location>
        <begin position="93"/>
        <end position="109"/>
    </location>
</feature>
<feature type="compositionally biased region" description="Low complexity" evidence="2">
    <location>
        <begin position="110"/>
        <end position="176"/>
    </location>
</feature>
<accession>Q55BX5</accession>
<name>NUP54_DICDI</name>
<comment type="function">
    <text evidence="1">Probable component of the nuclear pore complex, a complex required for the trafficking across the nuclear membrane.</text>
</comment>
<comment type="subcellular location">
    <subcellularLocation>
        <location evidence="1">Nucleus</location>
        <location evidence="1">Nuclear pore complex</location>
    </subcellularLocation>
</comment>
<comment type="domain">
    <text>Contains FG repeats.</text>
</comment>
<comment type="similarity">
    <text evidence="3">Belongs to the NUP54 family.</text>
</comment>
<reference key="1">
    <citation type="journal article" date="2005" name="Nature">
        <title>The genome of the social amoeba Dictyostelium discoideum.</title>
        <authorList>
            <person name="Eichinger L."/>
            <person name="Pachebat J.A."/>
            <person name="Gloeckner G."/>
            <person name="Rajandream M.A."/>
            <person name="Sucgang R."/>
            <person name="Berriman M."/>
            <person name="Song J."/>
            <person name="Olsen R."/>
            <person name="Szafranski K."/>
            <person name="Xu Q."/>
            <person name="Tunggal B."/>
            <person name="Kummerfeld S."/>
            <person name="Madera M."/>
            <person name="Konfortov B.A."/>
            <person name="Rivero F."/>
            <person name="Bankier A.T."/>
            <person name="Lehmann R."/>
            <person name="Hamlin N."/>
            <person name="Davies R."/>
            <person name="Gaudet P."/>
            <person name="Fey P."/>
            <person name="Pilcher K."/>
            <person name="Chen G."/>
            <person name="Saunders D."/>
            <person name="Sodergren E.J."/>
            <person name="Davis P."/>
            <person name="Kerhornou A."/>
            <person name="Nie X."/>
            <person name="Hall N."/>
            <person name="Anjard C."/>
            <person name="Hemphill L."/>
            <person name="Bason N."/>
            <person name="Farbrother P."/>
            <person name="Desany B."/>
            <person name="Just E."/>
            <person name="Morio T."/>
            <person name="Rost R."/>
            <person name="Churcher C.M."/>
            <person name="Cooper J."/>
            <person name="Haydock S."/>
            <person name="van Driessche N."/>
            <person name="Cronin A."/>
            <person name="Goodhead I."/>
            <person name="Muzny D.M."/>
            <person name="Mourier T."/>
            <person name="Pain A."/>
            <person name="Lu M."/>
            <person name="Harper D."/>
            <person name="Lindsay R."/>
            <person name="Hauser H."/>
            <person name="James K.D."/>
            <person name="Quiles M."/>
            <person name="Madan Babu M."/>
            <person name="Saito T."/>
            <person name="Buchrieser C."/>
            <person name="Wardroper A."/>
            <person name="Felder M."/>
            <person name="Thangavelu M."/>
            <person name="Johnson D."/>
            <person name="Knights A."/>
            <person name="Loulseged H."/>
            <person name="Mungall K.L."/>
            <person name="Oliver K."/>
            <person name="Price C."/>
            <person name="Quail M.A."/>
            <person name="Urushihara H."/>
            <person name="Hernandez J."/>
            <person name="Rabbinowitsch E."/>
            <person name="Steffen D."/>
            <person name="Sanders M."/>
            <person name="Ma J."/>
            <person name="Kohara Y."/>
            <person name="Sharp S."/>
            <person name="Simmonds M.N."/>
            <person name="Spiegler S."/>
            <person name="Tivey A."/>
            <person name="Sugano S."/>
            <person name="White B."/>
            <person name="Walker D."/>
            <person name="Woodward J.R."/>
            <person name="Winckler T."/>
            <person name="Tanaka Y."/>
            <person name="Shaulsky G."/>
            <person name="Schleicher M."/>
            <person name="Weinstock G.M."/>
            <person name="Rosenthal A."/>
            <person name="Cox E.C."/>
            <person name="Chisholm R.L."/>
            <person name="Gibbs R.A."/>
            <person name="Loomis W.F."/>
            <person name="Platzer M."/>
            <person name="Kay R.R."/>
            <person name="Williams J.G."/>
            <person name="Dear P.H."/>
            <person name="Noegel A.A."/>
            <person name="Barrell B.G."/>
            <person name="Kuspa A."/>
        </authorList>
    </citation>
    <scope>NUCLEOTIDE SEQUENCE [LARGE SCALE GENOMIC DNA]</scope>
    <source>
        <strain>AX4</strain>
    </source>
</reference>
<gene>
    <name type="primary">nup54</name>
    <name type="ORF">DDB_G0270320</name>
</gene>
<sequence>MSLFGNTTTGGGGLFGNTTTPTQTTGGGLFGNTTTGGGLFGNTATPTTGGGGLFGNTATPTLTTGGGGGLFGNTTAPTTGGGGLFGNTPTQTTGGGLFGNTATGGGGLFGNTQQQQQQQQQQQQQQQQQQQQQPSTSLFSQSSLGSQSSLGSQSSLGSQSSLGSQSSLGSFGQTQQPQTSSLFGNLQQQQQLQQPQRSIIEQKLYDFMQSISPNSLNCRFLYWFYNYQANGQLVDPNSIPKPPNVTVDQWAYALSNNPDPSILIPVAAKSFDDLINRRMKQEETIIALDQNTQEALKRMRDLENHLNFHIHTQLEMMRKKQIELIQRYIEVWSNLEIYQSKGKTFTTSEERIMKKIYELFEEINQPNSIKSKVEEISNQLKLGSMEKEKIKYEISPEAVEPLYNLLKNMTISIERITNELEIAVKDAQILKNELYQLKKC</sequence>
<evidence type="ECO:0000250" key="1">
    <source>
        <dbReference type="UniProtKB" id="P70582"/>
    </source>
</evidence>
<evidence type="ECO:0000256" key="2">
    <source>
        <dbReference type="SAM" id="MobiDB-lite"/>
    </source>
</evidence>
<evidence type="ECO:0000305" key="3"/>
<proteinExistence type="evidence at protein level"/>
<organism>
    <name type="scientific">Dictyostelium discoideum</name>
    <name type="common">Social amoeba</name>
    <dbReference type="NCBI Taxonomy" id="44689"/>
    <lineage>
        <taxon>Eukaryota</taxon>
        <taxon>Amoebozoa</taxon>
        <taxon>Evosea</taxon>
        <taxon>Eumycetozoa</taxon>
        <taxon>Dictyostelia</taxon>
        <taxon>Dictyosteliales</taxon>
        <taxon>Dictyosteliaceae</taxon>
        <taxon>Dictyostelium</taxon>
    </lineage>
</organism>